<reference key="1">
    <citation type="submission" date="2007-08" db="EMBL/GenBank/DDBJ databases">
        <authorList>
            <consortium name="The Vibrio harveyi Genome Sequencing Project"/>
            <person name="Bassler B."/>
            <person name="Clifton S.W."/>
            <person name="Fulton L."/>
            <person name="Delehaunty K."/>
            <person name="Fronick C."/>
            <person name="Harrison M."/>
            <person name="Markivic C."/>
            <person name="Fulton R."/>
            <person name="Tin-Wollam A.-M."/>
            <person name="Shah N."/>
            <person name="Pepin K."/>
            <person name="Nash W."/>
            <person name="Thiruvilangam P."/>
            <person name="Bhonagiri V."/>
            <person name="Waters C."/>
            <person name="Tu K.C."/>
            <person name="Irgon J."/>
            <person name="Wilson R.K."/>
        </authorList>
    </citation>
    <scope>NUCLEOTIDE SEQUENCE [LARGE SCALE GENOMIC DNA]</scope>
    <source>
        <strain>ATCC BAA-1116 / BB120</strain>
    </source>
</reference>
<comment type="catalytic activity">
    <reaction evidence="1">
        <text>tRNA(Leu) + L-leucine + ATP = L-leucyl-tRNA(Leu) + AMP + diphosphate</text>
        <dbReference type="Rhea" id="RHEA:11688"/>
        <dbReference type="Rhea" id="RHEA-COMP:9613"/>
        <dbReference type="Rhea" id="RHEA-COMP:9622"/>
        <dbReference type="ChEBI" id="CHEBI:30616"/>
        <dbReference type="ChEBI" id="CHEBI:33019"/>
        <dbReference type="ChEBI" id="CHEBI:57427"/>
        <dbReference type="ChEBI" id="CHEBI:78442"/>
        <dbReference type="ChEBI" id="CHEBI:78494"/>
        <dbReference type="ChEBI" id="CHEBI:456215"/>
        <dbReference type="EC" id="6.1.1.4"/>
    </reaction>
</comment>
<comment type="subcellular location">
    <subcellularLocation>
        <location evidence="1">Cytoplasm</location>
    </subcellularLocation>
</comment>
<comment type="similarity">
    <text evidence="1">Belongs to the class-I aminoacyl-tRNA synthetase family.</text>
</comment>
<keyword id="KW-0030">Aminoacyl-tRNA synthetase</keyword>
<keyword id="KW-0067">ATP-binding</keyword>
<keyword id="KW-0963">Cytoplasm</keyword>
<keyword id="KW-0436">Ligase</keyword>
<keyword id="KW-0547">Nucleotide-binding</keyword>
<keyword id="KW-0648">Protein biosynthesis</keyword>
<organism>
    <name type="scientific">Vibrio campbellii (strain ATCC BAA-1116)</name>
    <dbReference type="NCBI Taxonomy" id="2902295"/>
    <lineage>
        <taxon>Bacteria</taxon>
        <taxon>Pseudomonadati</taxon>
        <taxon>Pseudomonadota</taxon>
        <taxon>Gammaproteobacteria</taxon>
        <taxon>Vibrionales</taxon>
        <taxon>Vibrionaceae</taxon>
        <taxon>Vibrio</taxon>
    </lineage>
</organism>
<accession>A7MY86</accession>
<dbReference type="EC" id="6.1.1.4" evidence="1"/>
<dbReference type="EMBL" id="CP000789">
    <property type="protein sequence ID" value="ABU70211.1"/>
    <property type="molecule type" value="Genomic_DNA"/>
</dbReference>
<dbReference type="RefSeq" id="WP_012127189.1">
    <property type="nucleotide sequence ID" value="NC_009783.1"/>
</dbReference>
<dbReference type="SMR" id="A7MY86"/>
<dbReference type="KEGG" id="vha:VIBHAR_01222"/>
<dbReference type="PATRIC" id="fig|338187.25.peg.1407"/>
<dbReference type="Proteomes" id="UP000008152">
    <property type="component" value="Chromosome I"/>
</dbReference>
<dbReference type="GO" id="GO:0005829">
    <property type="term" value="C:cytosol"/>
    <property type="evidence" value="ECO:0007669"/>
    <property type="project" value="TreeGrafter"/>
</dbReference>
<dbReference type="GO" id="GO:0002161">
    <property type="term" value="F:aminoacyl-tRNA deacylase activity"/>
    <property type="evidence" value="ECO:0007669"/>
    <property type="project" value="InterPro"/>
</dbReference>
<dbReference type="GO" id="GO:0005524">
    <property type="term" value="F:ATP binding"/>
    <property type="evidence" value="ECO:0007669"/>
    <property type="project" value="UniProtKB-UniRule"/>
</dbReference>
<dbReference type="GO" id="GO:0004823">
    <property type="term" value="F:leucine-tRNA ligase activity"/>
    <property type="evidence" value="ECO:0007669"/>
    <property type="project" value="UniProtKB-UniRule"/>
</dbReference>
<dbReference type="GO" id="GO:0006429">
    <property type="term" value="P:leucyl-tRNA aminoacylation"/>
    <property type="evidence" value="ECO:0007669"/>
    <property type="project" value="UniProtKB-UniRule"/>
</dbReference>
<dbReference type="CDD" id="cd07958">
    <property type="entry name" value="Anticodon_Ia_Leu_BEm"/>
    <property type="match status" value="1"/>
</dbReference>
<dbReference type="CDD" id="cd00812">
    <property type="entry name" value="LeuRS_core"/>
    <property type="match status" value="1"/>
</dbReference>
<dbReference type="FunFam" id="1.10.730.10:FF:000002">
    <property type="entry name" value="Leucine--tRNA ligase"/>
    <property type="match status" value="1"/>
</dbReference>
<dbReference type="FunFam" id="2.20.28.290:FF:000001">
    <property type="entry name" value="Leucine--tRNA ligase"/>
    <property type="match status" value="1"/>
</dbReference>
<dbReference type="FunFam" id="3.10.20.590:FF:000001">
    <property type="entry name" value="Leucine--tRNA ligase"/>
    <property type="match status" value="1"/>
</dbReference>
<dbReference type="FunFam" id="3.40.50.620:FF:000003">
    <property type="entry name" value="Leucine--tRNA ligase"/>
    <property type="match status" value="1"/>
</dbReference>
<dbReference type="FunFam" id="3.40.50.620:FF:000051">
    <property type="entry name" value="Leucine--tRNA ligase"/>
    <property type="match status" value="1"/>
</dbReference>
<dbReference type="FunFam" id="3.90.740.10:FF:000012">
    <property type="entry name" value="Leucine--tRNA ligase"/>
    <property type="match status" value="1"/>
</dbReference>
<dbReference type="Gene3D" id="2.20.28.290">
    <property type="match status" value="1"/>
</dbReference>
<dbReference type="Gene3D" id="3.10.20.590">
    <property type="match status" value="1"/>
</dbReference>
<dbReference type="Gene3D" id="3.40.50.620">
    <property type="entry name" value="HUPs"/>
    <property type="match status" value="2"/>
</dbReference>
<dbReference type="Gene3D" id="1.10.730.10">
    <property type="entry name" value="Isoleucyl-tRNA Synthetase, Domain 1"/>
    <property type="match status" value="1"/>
</dbReference>
<dbReference type="Gene3D" id="3.90.740.10">
    <property type="entry name" value="Valyl/Leucyl/Isoleucyl-tRNA synthetase, editing domain"/>
    <property type="match status" value="1"/>
</dbReference>
<dbReference type="HAMAP" id="MF_00049_B">
    <property type="entry name" value="Leu_tRNA_synth_B"/>
    <property type="match status" value="1"/>
</dbReference>
<dbReference type="InterPro" id="IPR001412">
    <property type="entry name" value="aa-tRNA-synth_I_CS"/>
</dbReference>
<dbReference type="InterPro" id="IPR002300">
    <property type="entry name" value="aa-tRNA-synth_Ia"/>
</dbReference>
<dbReference type="InterPro" id="IPR002302">
    <property type="entry name" value="Leu-tRNA-ligase"/>
</dbReference>
<dbReference type="InterPro" id="IPR025709">
    <property type="entry name" value="Leu_tRNA-synth_edit"/>
</dbReference>
<dbReference type="InterPro" id="IPR013155">
    <property type="entry name" value="M/V/L/I-tRNA-synth_anticd-bd"/>
</dbReference>
<dbReference type="InterPro" id="IPR015413">
    <property type="entry name" value="Methionyl/Leucyl_tRNA_Synth"/>
</dbReference>
<dbReference type="InterPro" id="IPR014729">
    <property type="entry name" value="Rossmann-like_a/b/a_fold"/>
</dbReference>
<dbReference type="InterPro" id="IPR009080">
    <property type="entry name" value="tRNAsynth_Ia_anticodon-bd"/>
</dbReference>
<dbReference type="InterPro" id="IPR009008">
    <property type="entry name" value="Val/Leu/Ile-tRNA-synth_edit"/>
</dbReference>
<dbReference type="NCBIfam" id="TIGR00396">
    <property type="entry name" value="leuS_bact"/>
    <property type="match status" value="1"/>
</dbReference>
<dbReference type="PANTHER" id="PTHR43740:SF2">
    <property type="entry name" value="LEUCINE--TRNA LIGASE, MITOCHONDRIAL"/>
    <property type="match status" value="1"/>
</dbReference>
<dbReference type="PANTHER" id="PTHR43740">
    <property type="entry name" value="LEUCYL-TRNA SYNTHETASE"/>
    <property type="match status" value="1"/>
</dbReference>
<dbReference type="Pfam" id="PF08264">
    <property type="entry name" value="Anticodon_1"/>
    <property type="match status" value="1"/>
</dbReference>
<dbReference type="Pfam" id="PF00133">
    <property type="entry name" value="tRNA-synt_1"/>
    <property type="match status" value="2"/>
</dbReference>
<dbReference type="Pfam" id="PF13603">
    <property type="entry name" value="tRNA-synt_1_2"/>
    <property type="match status" value="1"/>
</dbReference>
<dbReference type="Pfam" id="PF09334">
    <property type="entry name" value="tRNA-synt_1g"/>
    <property type="match status" value="1"/>
</dbReference>
<dbReference type="PRINTS" id="PR00985">
    <property type="entry name" value="TRNASYNTHLEU"/>
</dbReference>
<dbReference type="SUPFAM" id="SSF47323">
    <property type="entry name" value="Anticodon-binding domain of a subclass of class I aminoacyl-tRNA synthetases"/>
    <property type="match status" value="1"/>
</dbReference>
<dbReference type="SUPFAM" id="SSF52374">
    <property type="entry name" value="Nucleotidylyl transferase"/>
    <property type="match status" value="1"/>
</dbReference>
<dbReference type="SUPFAM" id="SSF50677">
    <property type="entry name" value="ValRS/IleRS/LeuRS editing domain"/>
    <property type="match status" value="1"/>
</dbReference>
<dbReference type="PROSITE" id="PS00178">
    <property type="entry name" value="AA_TRNA_LIGASE_I"/>
    <property type="match status" value="1"/>
</dbReference>
<sequence length="862" mass="97056">MQEQYNPQDLEQKVQKHWDDNKTFVVSEDPNKEKFYCLSMFPYPSGRLHMGHVRNYTIGDVVSRFQRLQGKNVMQPIGWDAFGLPAENAAVKNNTAPAPWTYENIEYMKNQLKLLGFGYDWNREFATCTPEYYRWEQEFFTKLYEKGLVYKKTSSVNWCPNDQTVLANEQVEDGCCWRCDTPVEQKEIPQWFIKITEYAQELLDDLDKLEGWPEMVKTMQRNWIGRSEGVELRFALKDSEVKGQQDLEVYTTRPDTLMGVTYVGIAAGHPLATIAAENNPELAAFIEECKNTKVAEAELATMEKKGMATGLTAIHPLNGREVPVYVANFVLMDYGTGAVMAVPAHDQRDFEFATKYGLDIVPVIKPVDGSELDTSEAAYTEKGVLFDSGEFDGLEFQAAFDAIAAKLEAEGKGTKTVNFRLRDWGVSRQRYWGAPIPMVTTEDGEVHPVPADQLPVILPEDVVMDGVTSPIKADKEWAKTTFNGEPALRETDTFDTFMESSWYYARYCSPQADDILAPEKANYWLPVDQYIGGIEHACMHLLYSRFFHKLLRDAGYVTSDEPFKQLLCQGMVLADAFYFENEKGGKEWVAPTDVAVERDGKGRITSAKDTEGRDVTHSGMIKMSKSKNNGIDPQEMVDKYGADTVRLFMMFASPADMTLEWQESGVEGANRFLKRVWKLVNEHTSKGAAEAVDAAALSGDQKALRRDVHKTIAKVTDDIDRRQTFNTAIAAIMELMNKLAKAPQESAQDRVILDEALKAVVAMLYPITPHISYELWAALGEADIDNAAWPTFDEKALVEDEKTIVVQVNGKLRAKLTVAADATKEQVEELGLNDENVTKFTDGLTIRKVIYVPGKLLNIVAN</sequence>
<gene>
    <name evidence="1" type="primary">leuS</name>
    <name type="ordered locus">VIBHAR_01222</name>
</gene>
<proteinExistence type="inferred from homology"/>
<protein>
    <recommendedName>
        <fullName evidence="1">Leucine--tRNA ligase</fullName>
        <ecNumber evidence="1">6.1.1.4</ecNumber>
    </recommendedName>
    <alternativeName>
        <fullName evidence="1">Leucyl-tRNA synthetase</fullName>
        <shortName evidence="1">LeuRS</shortName>
    </alternativeName>
</protein>
<feature type="chain" id="PRO_1000009463" description="Leucine--tRNA ligase">
    <location>
        <begin position="1"/>
        <end position="862"/>
    </location>
</feature>
<feature type="short sequence motif" description="'HIGH' region">
    <location>
        <begin position="42"/>
        <end position="52"/>
    </location>
</feature>
<feature type="short sequence motif" description="'KMSKS' region">
    <location>
        <begin position="622"/>
        <end position="626"/>
    </location>
</feature>
<feature type="binding site" evidence="1">
    <location>
        <position position="625"/>
    </location>
    <ligand>
        <name>ATP</name>
        <dbReference type="ChEBI" id="CHEBI:30616"/>
    </ligand>
</feature>
<evidence type="ECO:0000255" key="1">
    <source>
        <dbReference type="HAMAP-Rule" id="MF_00049"/>
    </source>
</evidence>
<name>SYL_VIBC1</name>